<dbReference type="EC" id="4.2.1.20" evidence="1"/>
<dbReference type="EMBL" id="AE005674">
    <property type="protein sequence ID" value="AAN42876.1"/>
    <property type="molecule type" value="Genomic_DNA"/>
</dbReference>
<dbReference type="EMBL" id="AE014073">
    <property type="protein sequence ID" value="AAP16761.1"/>
    <property type="molecule type" value="Genomic_DNA"/>
</dbReference>
<dbReference type="RefSeq" id="NP_707169.1">
    <property type="nucleotide sequence ID" value="NC_004337.2"/>
</dbReference>
<dbReference type="RefSeq" id="WP_000443067.1">
    <property type="nucleotide sequence ID" value="NZ_WPGW01000009.1"/>
</dbReference>
<dbReference type="SMR" id="P0A878"/>
<dbReference type="STRING" id="198214.SF1263"/>
<dbReference type="PaxDb" id="198214-SF1263"/>
<dbReference type="GeneID" id="1024231"/>
<dbReference type="GeneID" id="75171374"/>
<dbReference type="KEGG" id="sfl:SF1263"/>
<dbReference type="KEGG" id="sfx:S1349"/>
<dbReference type="PATRIC" id="fig|198214.7.peg.1483"/>
<dbReference type="HOGENOM" id="CLU_016734_0_4_6"/>
<dbReference type="UniPathway" id="UPA00035">
    <property type="reaction ID" value="UER00044"/>
</dbReference>
<dbReference type="Proteomes" id="UP000001006">
    <property type="component" value="Chromosome"/>
</dbReference>
<dbReference type="Proteomes" id="UP000002673">
    <property type="component" value="Chromosome"/>
</dbReference>
<dbReference type="GO" id="GO:0005829">
    <property type="term" value="C:cytosol"/>
    <property type="evidence" value="ECO:0007669"/>
    <property type="project" value="TreeGrafter"/>
</dbReference>
<dbReference type="GO" id="GO:0004834">
    <property type="term" value="F:tryptophan synthase activity"/>
    <property type="evidence" value="ECO:0007669"/>
    <property type="project" value="UniProtKB-UniRule"/>
</dbReference>
<dbReference type="CDD" id="cd04724">
    <property type="entry name" value="Tryptophan_synthase_alpha"/>
    <property type="match status" value="1"/>
</dbReference>
<dbReference type="FunFam" id="3.20.20.70:FF:000037">
    <property type="entry name" value="Tryptophan synthase alpha chain"/>
    <property type="match status" value="1"/>
</dbReference>
<dbReference type="Gene3D" id="3.20.20.70">
    <property type="entry name" value="Aldolase class I"/>
    <property type="match status" value="1"/>
</dbReference>
<dbReference type="HAMAP" id="MF_00131">
    <property type="entry name" value="Trp_synth_alpha"/>
    <property type="match status" value="1"/>
</dbReference>
<dbReference type="InterPro" id="IPR013785">
    <property type="entry name" value="Aldolase_TIM"/>
</dbReference>
<dbReference type="InterPro" id="IPR011060">
    <property type="entry name" value="RibuloseP-bd_barrel"/>
</dbReference>
<dbReference type="InterPro" id="IPR018204">
    <property type="entry name" value="Trp_synthase_alpha_AS"/>
</dbReference>
<dbReference type="InterPro" id="IPR002028">
    <property type="entry name" value="Trp_synthase_suA"/>
</dbReference>
<dbReference type="NCBIfam" id="TIGR00262">
    <property type="entry name" value="trpA"/>
    <property type="match status" value="1"/>
</dbReference>
<dbReference type="PANTHER" id="PTHR43406:SF1">
    <property type="entry name" value="TRYPTOPHAN SYNTHASE ALPHA CHAIN, CHLOROPLASTIC"/>
    <property type="match status" value="1"/>
</dbReference>
<dbReference type="PANTHER" id="PTHR43406">
    <property type="entry name" value="TRYPTOPHAN SYNTHASE, ALPHA CHAIN"/>
    <property type="match status" value="1"/>
</dbReference>
<dbReference type="Pfam" id="PF00290">
    <property type="entry name" value="Trp_syntA"/>
    <property type="match status" value="1"/>
</dbReference>
<dbReference type="SUPFAM" id="SSF51366">
    <property type="entry name" value="Ribulose-phoshate binding barrel"/>
    <property type="match status" value="1"/>
</dbReference>
<dbReference type="PROSITE" id="PS00167">
    <property type="entry name" value="TRP_SYNTHASE_ALPHA"/>
    <property type="match status" value="1"/>
</dbReference>
<evidence type="ECO:0000255" key="1">
    <source>
        <dbReference type="HAMAP-Rule" id="MF_00131"/>
    </source>
</evidence>
<reference key="1">
    <citation type="journal article" date="2002" name="Nucleic Acids Res.">
        <title>Genome sequence of Shigella flexneri 2a: insights into pathogenicity through comparison with genomes of Escherichia coli K12 and O157.</title>
        <authorList>
            <person name="Jin Q."/>
            <person name="Yuan Z."/>
            <person name="Xu J."/>
            <person name="Wang Y."/>
            <person name="Shen Y."/>
            <person name="Lu W."/>
            <person name="Wang J."/>
            <person name="Liu H."/>
            <person name="Yang J."/>
            <person name="Yang F."/>
            <person name="Zhang X."/>
            <person name="Zhang J."/>
            <person name="Yang G."/>
            <person name="Wu H."/>
            <person name="Qu D."/>
            <person name="Dong J."/>
            <person name="Sun L."/>
            <person name="Xue Y."/>
            <person name="Zhao A."/>
            <person name="Gao Y."/>
            <person name="Zhu J."/>
            <person name="Kan B."/>
            <person name="Ding K."/>
            <person name="Chen S."/>
            <person name="Cheng H."/>
            <person name="Yao Z."/>
            <person name="He B."/>
            <person name="Chen R."/>
            <person name="Ma D."/>
            <person name="Qiang B."/>
            <person name="Wen Y."/>
            <person name="Hou Y."/>
            <person name="Yu J."/>
        </authorList>
    </citation>
    <scope>NUCLEOTIDE SEQUENCE [LARGE SCALE GENOMIC DNA]</scope>
    <source>
        <strain>301 / Serotype 2a</strain>
    </source>
</reference>
<reference key="2">
    <citation type="journal article" date="2003" name="Infect. Immun.">
        <title>Complete genome sequence and comparative genomics of Shigella flexneri serotype 2a strain 2457T.</title>
        <authorList>
            <person name="Wei J."/>
            <person name="Goldberg M.B."/>
            <person name="Burland V."/>
            <person name="Venkatesan M.M."/>
            <person name="Deng W."/>
            <person name="Fournier G."/>
            <person name="Mayhew G.F."/>
            <person name="Plunkett G. III"/>
            <person name="Rose D.J."/>
            <person name="Darling A."/>
            <person name="Mau B."/>
            <person name="Perna N.T."/>
            <person name="Payne S.M."/>
            <person name="Runyen-Janecky L.J."/>
            <person name="Zhou S."/>
            <person name="Schwartz D.C."/>
            <person name="Blattner F.R."/>
        </authorList>
    </citation>
    <scope>NUCLEOTIDE SEQUENCE [LARGE SCALE GENOMIC DNA]</scope>
    <source>
        <strain>ATCC 700930 / 2457T / Serotype 2a</strain>
    </source>
</reference>
<proteinExistence type="inferred from homology"/>
<organism>
    <name type="scientific">Shigella flexneri</name>
    <dbReference type="NCBI Taxonomy" id="623"/>
    <lineage>
        <taxon>Bacteria</taxon>
        <taxon>Pseudomonadati</taxon>
        <taxon>Pseudomonadota</taxon>
        <taxon>Gammaproteobacteria</taxon>
        <taxon>Enterobacterales</taxon>
        <taxon>Enterobacteriaceae</taxon>
        <taxon>Shigella</taxon>
    </lineage>
</organism>
<accession>P0A878</accession>
<accession>P00928</accession>
<accession>Q47669</accession>
<comment type="function">
    <text evidence="1">The alpha subunit is responsible for the aldol cleavage of indoleglycerol phosphate to indole and glyceraldehyde 3-phosphate.</text>
</comment>
<comment type="catalytic activity">
    <reaction evidence="1">
        <text>(1S,2R)-1-C-(indol-3-yl)glycerol 3-phosphate + L-serine = D-glyceraldehyde 3-phosphate + L-tryptophan + H2O</text>
        <dbReference type="Rhea" id="RHEA:10532"/>
        <dbReference type="ChEBI" id="CHEBI:15377"/>
        <dbReference type="ChEBI" id="CHEBI:33384"/>
        <dbReference type="ChEBI" id="CHEBI:57912"/>
        <dbReference type="ChEBI" id="CHEBI:58866"/>
        <dbReference type="ChEBI" id="CHEBI:59776"/>
        <dbReference type="EC" id="4.2.1.20"/>
    </reaction>
</comment>
<comment type="pathway">
    <text evidence="1">Amino-acid biosynthesis; L-tryptophan biosynthesis; L-tryptophan from chorismate: step 5/5.</text>
</comment>
<comment type="subunit">
    <text evidence="1">Tetramer of two alpha and two beta chains.</text>
</comment>
<comment type="similarity">
    <text evidence="1">Belongs to the TrpA family.</text>
</comment>
<sequence>MERYESLFAQLKERKEGAFVPFVTLGDPGIEQSLKIIDTLIEAGADALELGIPFSDPLADGPTIQNATLRAFAAGVTPAQCFEMLALIRQKHPTIPIGLLMYANLVFNKGIDEFYAQCEKVGVDSVLVADVPVEESAPFRQAALRHNVAPIFICPPNADDDLLRQIASYGRGYTYLLSRAGVTGAENRAALPLNHLVAKLKEYNAAPPLQGFGISAPDQVKAAIDAGAAGAISGSAIVKIIEQHINEPEKMLAALKVFVQPMKAATRS</sequence>
<protein>
    <recommendedName>
        <fullName evidence="1">Tryptophan synthase alpha chain</fullName>
        <ecNumber evidence="1">4.2.1.20</ecNumber>
    </recommendedName>
</protein>
<gene>
    <name evidence="1" type="primary">trpA</name>
    <name type="ordered locus">SF1263</name>
    <name type="ordered locus">S1349</name>
</gene>
<feature type="chain" id="PRO_0000098841" description="Tryptophan synthase alpha chain">
    <location>
        <begin position="1"/>
        <end position="268"/>
    </location>
</feature>
<feature type="active site" description="Proton acceptor" evidence="1">
    <location>
        <position position="49"/>
    </location>
</feature>
<feature type="active site" description="Proton acceptor" evidence="1">
    <location>
        <position position="60"/>
    </location>
</feature>
<keyword id="KW-0028">Amino-acid biosynthesis</keyword>
<keyword id="KW-0057">Aromatic amino acid biosynthesis</keyword>
<keyword id="KW-0456">Lyase</keyword>
<keyword id="KW-1185">Reference proteome</keyword>
<keyword id="KW-0822">Tryptophan biosynthesis</keyword>
<name>TRPA_SHIFL</name>